<organismHost>
    <name type="scientific">Homo sapiens</name>
    <name type="common">Human</name>
    <dbReference type="NCBI Taxonomy" id="9606"/>
</organismHost>
<reference key="1">
    <citation type="journal article" date="1996" name="J. Virol.">
        <title>Determination and analysis of the complete nucleotide sequence of human herpesvirus.</title>
        <authorList>
            <person name="Nicholas J."/>
        </authorList>
    </citation>
    <scope>NUCLEOTIDE SEQUENCE [LARGE SCALE GENOMIC DNA]</scope>
</reference>
<organism>
    <name type="scientific">Human herpesvirus 7 (strain JI)</name>
    <name type="common">HHV-7</name>
    <name type="synonym">Human T lymphotropic virus</name>
    <dbReference type="NCBI Taxonomy" id="57278"/>
    <lineage>
        <taxon>Viruses</taxon>
        <taxon>Duplodnaviria</taxon>
        <taxon>Heunggongvirae</taxon>
        <taxon>Peploviricota</taxon>
        <taxon>Herviviricetes</taxon>
        <taxon>Herpesvirales</taxon>
        <taxon>Orthoherpesviridae</taxon>
        <taxon>Betaherpesvirinae</taxon>
        <taxon>Roseolovirus</taxon>
        <taxon>Roseolovirus humanbeta7</taxon>
        <taxon>Human betaherpesvirus 7</taxon>
    </lineage>
</organism>
<name>TRX2_HHV7J</name>
<accession>P68321</accession>
<accession>P52350</accession>
<dbReference type="EMBL" id="U43400">
    <property type="protein sequence ID" value="AAC54719.1"/>
    <property type="molecule type" value="Genomic_DNA"/>
</dbReference>
<dbReference type="PIR" id="T41959">
    <property type="entry name" value="T41959"/>
</dbReference>
<dbReference type="RefSeq" id="YP_073798.1">
    <property type="nucleotide sequence ID" value="NC_001716.2"/>
</dbReference>
<dbReference type="SMR" id="P68321"/>
<dbReference type="DNASU" id="3289516"/>
<dbReference type="GeneID" id="3289516"/>
<dbReference type="KEGG" id="vg:3289516"/>
<dbReference type="Proteomes" id="UP000009246">
    <property type="component" value="Segment"/>
</dbReference>
<dbReference type="GO" id="GO:0042025">
    <property type="term" value="C:host cell nucleus"/>
    <property type="evidence" value="ECO:0007669"/>
    <property type="project" value="UniProtKB-SubCell"/>
</dbReference>
<dbReference type="GO" id="GO:0019028">
    <property type="term" value="C:viral capsid"/>
    <property type="evidence" value="ECO:0007669"/>
    <property type="project" value="UniProtKB-KW"/>
</dbReference>
<dbReference type="GO" id="GO:0005198">
    <property type="term" value="F:structural molecule activity"/>
    <property type="evidence" value="ECO:0007669"/>
    <property type="project" value="InterPro"/>
</dbReference>
<dbReference type="HAMAP" id="MF_04019">
    <property type="entry name" value="HSV_TRX2"/>
    <property type="match status" value="1"/>
</dbReference>
<dbReference type="InterPro" id="IPR002690">
    <property type="entry name" value="Herpes_capsid_2"/>
</dbReference>
<dbReference type="Pfam" id="PF01802">
    <property type="entry name" value="Herpes_V23"/>
    <property type="match status" value="1"/>
</dbReference>
<keyword id="KW-0167">Capsid protein</keyword>
<keyword id="KW-1048">Host nucleus</keyword>
<keyword id="KW-1185">Reference proteome</keyword>
<keyword id="KW-0946">Virion</keyword>
<feature type="chain" id="PRO_0000115728" description="Triplex capsid protein 2">
    <location>
        <begin position="1"/>
        <end position="293"/>
    </location>
</feature>
<evidence type="ECO:0000255" key="1">
    <source>
        <dbReference type="HAMAP-Rule" id="MF_04019"/>
    </source>
</evidence>
<gene>
    <name evidence="1" type="primary">TRX2</name>
    <name type="ordered locus">U56</name>
</gene>
<sequence length="293" mass="33338">MDSIYCTFDQKLTLSDIGTLCKLTNAVIPIPSHRHLIGNTNLGLYTVLSTTTDYIQIRDILKTMVLTILQKVEGNQLILIRPKIGHQYEIKNTGPFPLEKGDQLSLLPPFLKPSQQLLVLPNWELILPLLIPTDVATEINVRMLCISLLSIHRKYEEVQIIIDELRTLQYRDVTIKLPDVINDCKSTFSMKTACISFSMIATMAPDIVQTYIERLSLEDQSMLLIKCQELLAKKNFSQEPSSFKATEIKTELQKIKTVFTMINQINSLTQEKTFFIVADVSADNRLATCIFKE</sequence>
<comment type="function">
    <text evidence="1">Structural component of the T=16 icosahedral capsid. The capsid is composed of pentamers and hexamers of major capsid protein/MCP, which are linked together by heterotrimers called triplexes. These triplexes are formed by a single molecule of triplex protein 1/TRX1 and two copies of triplex protein 2/TRX2. Additionally, TRX1 is required for efficient transport of TRX2 to the nucleus, which is the site of capsid assembly.</text>
</comment>
<comment type="subunit">
    <text evidence="1">Interacts with TRX1 and major capisd protein/MCP.</text>
</comment>
<comment type="subcellular location">
    <subcellularLocation>
        <location evidence="1">Virion</location>
    </subcellularLocation>
    <subcellularLocation>
        <location evidence="1">Host nucleus</location>
    </subcellularLocation>
</comment>
<comment type="similarity">
    <text evidence="1">Belongs to the herpesviridae TRX2 protein family.</text>
</comment>
<proteinExistence type="inferred from homology"/>
<protein>
    <recommendedName>
        <fullName evidence="1">Triplex capsid protein 2</fullName>
    </recommendedName>
</protein>